<comment type="catalytic activity">
    <reaction evidence="1">
        <text>(2R)-3-phosphoglycerate + ATP = (2R)-3-phospho-glyceroyl phosphate + ADP</text>
        <dbReference type="Rhea" id="RHEA:14801"/>
        <dbReference type="ChEBI" id="CHEBI:30616"/>
        <dbReference type="ChEBI" id="CHEBI:57604"/>
        <dbReference type="ChEBI" id="CHEBI:58272"/>
        <dbReference type="ChEBI" id="CHEBI:456216"/>
        <dbReference type="EC" id="2.7.2.3"/>
    </reaction>
</comment>
<comment type="pathway">
    <text evidence="1">Carbohydrate degradation; glycolysis; pyruvate from D-glyceraldehyde 3-phosphate: step 2/5.</text>
</comment>
<comment type="subunit">
    <text evidence="1">Monomer.</text>
</comment>
<comment type="subcellular location">
    <subcellularLocation>
        <location evidence="1">Cytoplasm</location>
    </subcellularLocation>
</comment>
<comment type="similarity">
    <text evidence="1">Belongs to the phosphoglycerate kinase family.</text>
</comment>
<gene>
    <name evidence="1" type="primary">pgk</name>
    <name type="ordered locus">Sbal223_3463</name>
</gene>
<evidence type="ECO:0000255" key="1">
    <source>
        <dbReference type="HAMAP-Rule" id="MF_00145"/>
    </source>
</evidence>
<feature type="chain" id="PRO_1000192846" description="Phosphoglycerate kinase">
    <location>
        <begin position="1"/>
        <end position="391"/>
    </location>
</feature>
<feature type="binding site" evidence="1">
    <location>
        <begin position="21"/>
        <end position="23"/>
    </location>
    <ligand>
        <name>substrate</name>
    </ligand>
</feature>
<feature type="binding site" evidence="1">
    <location>
        <position position="36"/>
    </location>
    <ligand>
        <name>substrate</name>
    </ligand>
</feature>
<feature type="binding site" evidence="1">
    <location>
        <begin position="59"/>
        <end position="62"/>
    </location>
    <ligand>
        <name>substrate</name>
    </ligand>
</feature>
<feature type="binding site" evidence="1">
    <location>
        <position position="113"/>
    </location>
    <ligand>
        <name>substrate</name>
    </ligand>
</feature>
<feature type="binding site" evidence="1">
    <location>
        <position position="146"/>
    </location>
    <ligand>
        <name>substrate</name>
    </ligand>
</feature>
<feature type="binding site" evidence="1">
    <location>
        <position position="197"/>
    </location>
    <ligand>
        <name>ATP</name>
        <dbReference type="ChEBI" id="CHEBI:30616"/>
    </ligand>
</feature>
<feature type="binding site" evidence="1">
    <location>
        <position position="319"/>
    </location>
    <ligand>
        <name>ATP</name>
        <dbReference type="ChEBI" id="CHEBI:30616"/>
    </ligand>
</feature>
<feature type="binding site" evidence="1">
    <location>
        <begin position="345"/>
        <end position="348"/>
    </location>
    <ligand>
        <name>ATP</name>
        <dbReference type="ChEBI" id="CHEBI:30616"/>
    </ligand>
</feature>
<sequence>MAIINMSDLDLQGKRVLIREDLNVPVSNGVVTSDARLRASLPTIELALAKGAAVMVMSHLGRPTEGEYNPEYSMQPVVDYLAKALSCPVRLATDYLDGVDVAVGEVVVFENVRFNVGEGKNNEALSKKMAALCDVYVMDAFGTAHRAQASTHGVGMFAPIACAGPLLAQELDALGKALDNPARPMVAIVGGSKVSTKLTVLESLSGIVDQLVVGGGIANTFIAAAGYNVGKSLYEADLIDEAKRLVANAKSRGADIPVPTDVVVAGEFSPTAAATLKSVSEVADGEMIFDIGPDSAEALAKIIESAGTIVWNGPVGVFEFDQFGEGTKRIAQAIADSKAFSIAGGGDTLAAVDKYGIADKVSYISTGGGAFLEFLEGKELPAVAMLEKRGA</sequence>
<reference key="1">
    <citation type="submission" date="2008-12" db="EMBL/GenBank/DDBJ databases">
        <title>Complete sequence of chromosome of Shewanella baltica OS223.</title>
        <authorList>
            <consortium name="US DOE Joint Genome Institute"/>
            <person name="Lucas S."/>
            <person name="Copeland A."/>
            <person name="Lapidus A."/>
            <person name="Glavina del Rio T."/>
            <person name="Dalin E."/>
            <person name="Tice H."/>
            <person name="Bruce D."/>
            <person name="Goodwin L."/>
            <person name="Pitluck S."/>
            <person name="Chertkov O."/>
            <person name="Meincke L."/>
            <person name="Brettin T."/>
            <person name="Detter J.C."/>
            <person name="Han C."/>
            <person name="Kuske C.R."/>
            <person name="Larimer F."/>
            <person name="Land M."/>
            <person name="Hauser L."/>
            <person name="Kyrpides N."/>
            <person name="Ovchinnikova G."/>
            <person name="Brettar I."/>
            <person name="Rodrigues J."/>
            <person name="Konstantinidis K."/>
            <person name="Tiedje J."/>
        </authorList>
    </citation>
    <scope>NUCLEOTIDE SEQUENCE [LARGE SCALE GENOMIC DNA]</scope>
    <source>
        <strain>OS223</strain>
    </source>
</reference>
<dbReference type="EC" id="2.7.2.3" evidence="1"/>
<dbReference type="EMBL" id="CP001252">
    <property type="protein sequence ID" value="ACK47947.1"/>
    <property type="molecule type" value="Genomic_DNA"/>
</dbReference>
<dbReference type="RefSeq" id="WP_006084021.1">
    <property type="nucleotide sequence ID" value="NC_011663.1"/>
</dbReference>
<dbReference type="SMR" id="B8E5U4"/>
<dbReference type="KEGG" id="sbp:Sbal223_3463"/>
<dbReference type="HOGENOM" id="CLU_025427_0_2_6"/>
<dbReference type="UniPathway" id="UPA00109">
    <property type="reaction ID" value="UER00185"/>
</dbReference>
<dbReference type="Proteomes" id="UP000002507">
    <property type="component" value="Chromosome"/>
</dbReference>
<dbReference type="GO" id="GO:0005829">
    <property type="term" value="C:cytosol"/>
    <property type="evidence" value="ECO:0007669"/>
    <property type="project" value="TreeGrafter"/>
</dbReference>
<dbReference type="GO" id="GO:0043531">
    <property type="term" value="F:ADP binding"/>
    <property type="evidence" value="ECO:0007669"/>
    <property type="project" value="TreeGrafter"/>
</dbReference>
<dbReference type="GO" id="GO:0005524">
    <property type="term" value="F:ATP binding"/>
    <property type="evidence" value="ECO:0007669"/>
    <property type="project" value="UniProtKB-KW"/>
</dbReference>
<dbReference type="GO" id="GO:0004618">
    <property type="term" value="F:phosphoglycerate kinase activity"/>
    <property type="evidence" value="ECO:0007669"/>
    <property type="project" value="UniProtKB-UniRule"/>
</dbReference>
<dbReference type="GO" id="GO:0006094">
    <property type="term" value="P:gluconeogenesis"/>
    <property type="evidence" value="ECO:0007669"/>
    <property type="project" value="TreeGrafter"/>
</dbReference>
<dbReference type="GO" id="GO:0006096">
    <property type="term" value="P:glycolytic process"/>
    <property type="evidence" value="ECO:0007669"/>
    <property type="project" value="UniProtKB-UniRule"/>
</dbReference>
<dbReference type="FunFam" id="3.40.50.1260:FF:000001">
    <property type="entry name" value="Phosphoglycerate kinase"/>
    <property type="match status" value="1"/>
</dbReference>
<dbReference type="FunFam" id="3.40.50.1260:FF:000002">
    <property type="entry name" value="Phosphoglycerate kinase"/>
    <property type="match status" value="1"/>
</dbReference>
<dbReference type="Gene3D" id="3.40.50.1260">
    <property type="entry name" value="Phosphoglycerate kinase, N-terminal domain"/>
    <property type="match status" value="2"/>
</dbReference>
<dbReference type="HAMAP" id="MF_00145">
    <property type="entry name" value="Phosphoglyc_kinase"/>
    <property type="match status" value="1"/>
</dbReference>
<dbReference type="InterPro" id="IPR001576">
    <property type="entry name" value="Phosphoglycerate_kinase"/>
</dbReference>
<dbReference type="InterPro" id="IPR015911">
    <property type="entry name" value="Phosphoglycerate_kinase_CS"/>
</dbReference>
<dbReference type="InterPro" id="IPR015824">
    <property type="entry name" value="Phosphoglycerate_kinase_N"/>
</dbReference>
<dbReference type="InterPro" id="IPR036043">
    <property type="entry name" value="Phosphoglycerate_kinase_sf"/>
</dbReference>
<dbReference type="PANTHER" id="PTHR11406">
    <property type="entry name" value="PHOSPHOGLYCERATE KINASE"/>
    <property type="match status" value="1"/>
</dbReference>
<dbReference type="PANTHER" id="PTHR11406:SF23">
    <property type="entry name" value="PHOSPHOGLYCERATE KINASE 1, CHLOROPLASTIC-RELATED"/>
    <property type="match status" value="1"/>
</dbReference>
<dbReference type="Pfam" id="PF00162">
    <property type="entry name" value="PGK"/>
    <property type="match status" value="1"/>
</dbReference>
<dbReference type="PIRSF" id="PIRSF000724">
    <property type="entry name" value="Pgk"/>
    <property type="match status" value="1"/>
</dbReference>
<dbReference type="PRINTS" id="PR00477">
    <property type="entry name" value="PHGLYCKINASE"/>
</dbReference>
<dbReference type="SUPFAM" id="SSF53748">
    <property type="entry name" value="Phosphoglycerate kinase"/>
    <property type="match status" value="1"/>
</dbReference>
<dbReference type="PROSITE" id="PS00111">
    <property type="entry name" value="PGLYCERATE_KINASE"/>
    <property type="match status" value="1"/>
</dbReference>
<accession>B8E5U4</accession>
<protein>
    <recommendedName>
        <fullName evidence="1">Phosphoglycerate kinase</fullName>
        <ecNumber evidence="1">2.7.2.3</ecNumber>
    </recommendedName>
</protein>
<proteinExistence type="inferred from homology"/>
<keyword id="KW-0067">ATP-binding</keyword>
<keyword id="KW-0963">Cytoplasm</keyword>
<keyword id="KW-0324">Glycolysis</keyword>
<keyword id="KW-0418">Kinase</keyword>
<keyword id="KW-0547">Nucleotide-binding</keyword>
<keyword id="KW-0808">Transferase</keyword>
<name>PGK_SHEB2</name>
<organism>
    <name type="scientific">Shewanella baltica (strain OS223)</name>
    <dbReference type="NCBI Taxonomy" id="407976"/>
    <lineage>
        <taxon>Bacteria</taxon>
        <taxon>Pseudomonadati</taxon>
        <taxon>Pseudomonadota</taxon>
        <taxon>Gammaproteobacteria</taxon>
        <taxon>Alteromonadales</taxon>
        <taxon>Shewanellaceae</taxon>
        <taxon>Shewanella</taxon>
    </lineage>
</organism>